<accession>O59774</accession>
<comment type="function">
    <text evidence="4">Cleaves at paired basic residues.</text>
</comment>
<comment type="subcellular location">
    <subcellularLocation>
        <location>Endoplasmic reticulum membrane</location>
        <topology>Single-pass membrane protein</topology>
    </subcellularLocation>
    <subcellularLocation>
        <location>Secreted</location>
        <location>Cell wall</location>
    </subcellularLocation>
</comment>
<comment type="similarity">
    <text evidence="5">Belongs to the peptidase A1 family.</text>
</comment>
<keyword id="KW-0064">Aspartyl protease</keyword>
<keyword id="KW-0134">Cell wall</keyword>
<keyword id="KW-0256">Endoplasmic reticulum</keyword>
<keyword id="KW-0325">Glycoprotein</keyword>
<keyword id="KW-0378">Hydrolase</keyword>
<keyword id="KW-0472">Membrane</keyword>
<keyword id="KW-0645">Protease</keyword>
<keyword id="KW-1185">Reference proteome</keyword>
<keyword id="KW-0964">Secreted</keyword>
<keyword id="KW-0732">Signal</keyword>
<keyword id="KW-0812">Transmembrane</keyword>
<keyword id="KW-1133">Transmembrane helix</keyword>
<protein>
    <recommendedName>
        <fullName>Aspartic proteinase yapsin-1</fullName>
        <ecNumber>3.4.23.-</ecNumber>
    </recommendedName>
</protein>
<name>YPS1_SCHPO</name>
<gene>
    <name type="primary">yps1</name>
    <name type="ORF">SPCC1795.09</name>
</gene>
<feature type="signal peptide" evidence="2">
    <location>
        <begin position="1"/>
        <end position="17"/>
    </location>
</feature>
<feature type="chain" id="PRO_0000255598" description="Aspartic proteinase yapsin-1">
    <location>
        <begin position="18"/>
        <end position="521"/>
    </location>
</feature>
<feature type="topological domain" description="Extracellular" evidence="2">
    <location>
        <begin position="18"/>
        <end position="500"/>
    </location>
</feature>
<feature type="transmembrane region" description="Helical" evidence="2">
    <location>
        <begin position="501"/>
        <end position="521"/>
    </location>
</feature>
<feature type="domain" description="Peptidase A1" evidence="3">
    <location>
        <begin position="67"/>
        <end position="409"/>
    </location>
</feature>
<feature type="active site" evidence="1">
    <location>
        <position position="85"/>
    </location>
</feature>
<feature type="glycosylation site" description="N-linked (GlcNAc...) asparagine" evidence="2">
    <location>
        <position position="136"/>
    </location>
</feature>
<feature type="glycosylation site" description="N-linked (GlcNAc...) asparagine" evidence="2">
    <location>
        <position position="157"/>
    </location>
</feature>
<feature type="glycosylation site" description="N-linked (GlcNAc...) asparagine" evidence="2">
    <location>
        <position position="250"/>
    </location>
</feature>
<feature type="glycosylation site" description="N-linked (GlcNAc...) asparagine" evidence="2">
    <location>
        <position position="289"/>
    </location>
</feature>
<feature type="glycosylation site" description="N-linked (GlcNAc...) asparagine" evidence="2">
    <location>
        <position position="295"/>
    </location>
</feature>
<feature type="glycosylation site" description="N-linked (GlcNAc...) asparagine" evidence="2">
    <location>
        <position position="354"/>
    </location>
</feature>
<feature type="glycosylation site" description="N-linked (GlcNAc...) asparagine" evidence="2">
    <location>
        <position position="414"/>
    </location>
</feature>
<feature type="glycosylation site" description="N-linked (GlcNAc...) asparagine" evidence="2">
    <location>
        <position position="418"/>
    </location>
</feature>
<feature type="glycosylation site" description="N-linked (GlcNAc...) asparagine" evidence="2">
    <location>
        <position position="460"/>
    </location>
</feature>
<feature type="glycosylation site" description="N-linked (GlcNAc...) asparagine" evidence="2">
    <location>
        <position position="484"/>
    </location>
</feature>
<reference key="1">
    <citation type="journal article" date="2002" name="Nature">
        <title>The genome sequence of Schizosaccharomyces pombe.</title>
        <authorList>
            <person name="Wood V."/>
            <person name="Gwilliam R."/>
            <person name="Rajandream M.A."/>
            <person name="Lyne M.H."/>
            <person name="Lyne R."/>
            <person name="Stewart A."/>
            <person name="Sgouros J.G."/>
            <person name="Peat N."/>
            <person name="Hayles J."/>
            <person name="Baker S.G."/>
            <person name="Basham D."/>
            <person name="Bowman S."/>
            <person name="Brooks K."/>
            <person name="Brown D."/>
            <person name="Brown S."/>
            <person name="Chillingworth T."/>
            <person name="Churcher C.M."/>
            <person name="Collins M."/>
            <person name="Connor R."/>
            <person name="Cronin A."/>
            <person name="Davis P."/>
            <person name="Feltwell T."/>
            <person name="Fraser A."/>
            <person name="Gentles S."/>
            <person name="Goble A."/>
            <person name="Hamlin N."/>
            <person name="Harris D.E."/>
            <person name="Hidalgo J."/>
            <person name="Hodgson G."/>
            <person name="Holroyd S."/>
            <person name="Hornsby T."/>
            <person name="Howarth S."/>
            <person name="Huckle E.J."/>
            <person name="Hunt S."/>
            <person name="Jagels K."/>
            <person name="James K.D."/>
            <person name="Jones L."/>
            <person name="Jones M."/>
            <person name="Leather S."/>
            <person name="McDonald S."/>
            <person name="McLean J."/>
            <person name="Mooney P."/>
            <person name="Moule S."/>
            <person name="Mungall K.L."/>
            <person name="Murphy L.D."/>
            <person name="Niblett D."/>
            <person name="Odell C."/>
            <person name="Oliver K."/>
            <person name="O'Neil S."/>
            <person name="Pearson D."/>
            <person name="Quail M.A."/>
            <person name="Rabbinowitsch E."/>
            <person name="Rutherford K.M."/>
            <person name="Rutter S."/>
            <person name="Saunders D."/>
            <person name="Seeger K."/>
            <person name="Sharp S."/>
            <person name="Skelton J."/>
            <person name="Simmonds M.N."/>
            <person name="Squares R."/>
            <person name="Squares S."/>
            <person name="Stevens K."/>
            <person name="Taylor K."/>
            <person name="Taylor R.G."/>
            <person name="Tivey A."/>
            <person name="Walsh S.V."/>
            <person name="Warren T."/>
            <person name="Whitehead S."/>
            <person name="Woodward J.R."/>
            <person name="Volckaert G."/>
            <person name="Aert R."/>
            <person name="Robben J."/>
            <person name="Grymonprez B."/>
            <person name="Weltjens I."/>
            <person name="Vanstreels E."/>
            <person name="Rieger M."/>
            <person name="Schaefer M."/>
            <person name="Mueller-Auer S."/>
            <person name="Gabel C."/>
            <person name="Fuchs M."/>
            <person name="Duesterhoeft A."/>
            <person name="Fritzc C."/>
            <person name="Holzer E."/>
            <person name="Moestl D."/>
            <person name="Hilbert H."/>
            <person name="Borzym K."/>
            <person name="Langer I."/>
            <person name="Beck A."/>
            <person name="Lehrach H."/>
            <person name="Reinhardt R."/>
            <person name="Pohl T.M."/>
            <person name="Eger P."/>
            <person name="Zimmermann W."/>
            <person name="Wedler H."/>
            <person name="Wambutt R."/>
            <person name="Purnelle B."/>
            <person name="Goffeau A."/>
            <person name="Cadieu E."/>
            <person name="Dreano S."/>
            <person name="Gloux S."/>
            <person name="Lelaure V."/>
            <person name="Mottier S."/>
            <person name="Galibert F."/>
            <person name="Aves S.J."/>
            <person name="Xiang Z."/>
            <person name="Hunt C."/>
            <person name="Moore K."/>
            <person name="Hurst S.M."/>
            <person name="Lucas M."/>
            <person name="Rochet M."/>
            <person name="Gaillardin C."/>
            <person name="Tallada V.A."/>
            <person name="Garzon A."/>
            <person name="Thode G."/>
            <person name="Daga R.R."/>
            <person name="Cruzado L."/>
            <person name="Jimenez J."/>
            <person name="Sanchez M."/>
            <person name="del Rey F."/>
            <person name="Benito J."/>
            <person name="Dominguez A."/>
            <person name="Revuelta J.L."/>
            <person name="Moreno S."/>
            <person name="Armstrong J."/>
            <person name="Forsburg S.L."/>
            <person name="Cerutti L."/>
            <person name="Lowe T."/>
            <person name="McCombie W.R."/>
            <person name="Paulsen I."/>
            <person name="Potashkin J."/>
            <person name="Shpakovski G.V."/>
            <person name="Ussery D."/>
            <person name="Barrell B.G."/>
            <person name="Nurse P."/>
        </authorList>
    </citation>
    <scope>NUCLEOTIDE SEQUENCE [LARGE SCALE GENOMIC DNA]</scope>
    <source>
        <strain>972 / ATCC 24843</strain>
    </source>
</reference>
<reference key="2">
    <citation type="journal article" date="2000" name="Mol. Microbiol.">
        <title>Identification of proteases with shared functions to the proprotein processing protease Krp1 in the fission yeast Schizosaccharomyces pombe.</title>
        <authorList>
            <person name="Ladds G."/>
            <person name="Davey J."/>
        </authorList>
    </citation>
    <scope>FUNCTION</scope>
    <scope>SUBCELLULAR LOCATION IN CELL WALL</scope>
</reference>
<reference key="3">
    <citation type="journal article" date="2006" name="Nat. Biotechnol.">
        <title>ORFeome cloning and global analysis of protein localization in the fission yeast Schizosaccharomyces pombe.</title>
        <authorList>
            <person name="Matsuyama A."/>
            <person name="Arai R."/>
            <person name="Yashiroda Y."/>
            <person name="Shirai A."/>
            <person name="Kamata A."/>
            <person name="Sekido S."/>
            <person name="Kobayashi Y."/>
            <person name="Hashimoto A."/>
            <person name="Hamamoto M."/>
            <person name="Hiraoka Y."/>
            <person name="Horinouchi S."/>
            <person name="Yoshida M."/>
        </authorList>
    </citation>
    <scope>SUBCELLULAR LOCATION [LARGE SCALE ANALYSIS]</scope>
</reference>
<organism>
    <name type="scientific">Schizosaccharomyces pombe (strain 972 / ATCC 24843)</name>
    <name type="common">Fission yeast</name>
    <dbReference type="NCBI Taxonomy" id="284812"/>
    <lineage>
        <taxon>Eukaryota</taxon>
        <taxon>Fungi</taxon>
        <taxon>Dikarya</taxon>
        <taxon>Ascomycota</taxon>
        <taxon>Taphrinomycotina</taxon>
        <taxon>Schizosaccharomycetes</taxon>
        <taxon>Schizosaccharomycetales</taxon>
        <taxon>Schizosaccharomycetaceae</taxon>
        <taxon>Schizosaccharomyces</taxon>
    </lineage>
</organism>
<evidence type="ECO:0000250" key="1"/>
<evidence type="ECO:0000255" key="2"/>
<evidence type="ECO:0000255" key="3">
    <source>
        <dbReference type="PROSITE-ProRule" id="PRU01103"/>
    </source>
</evidence>
<evidence type="ECO:0000269" key="4">
    <source>
    </source>
</evidence>
<evidence type="ECO:0000305" key="5"/>
<dbReference type="EC" id="3.4.23.-"/>
<dbReference type="EMBL" id="CU329672">
    <property type="protein sequence ID" value="CAA18644.1"/>
    <property type="molecule type" value="Genomic_DNA"/>
</dbReference>
<dbReference type="PIR" id="T41134">
    <property type="entry name" value="T41134"/>
</dbReference>
<dbReference type="RefSeq" id="NP_588035.1">
    <property type="nucleotide sequence ID" value="NM_001023027.2"/>
</dbReference>
<dbReference type="SMR" id="O59774"/>
<dbReference type="BioGRID" id="275503">
    <property type="interactions" value="18"/>
</dbReference>
<dbReference type="FunCoup" id="O59774">
    <property type="interactions" value="46"/>
</dbReference>
<dbReference type="STRING" id="284812.O59774"/>
<dbReference type="MEROPS" id="A01.056"/>
<dbReference type="GlyCosmos" id="O59774">
    <property type="glycosylation" value="10 sites, No reported glycans"/>
</dbReference>
<dbReference type="PaxDb" id="4896-SPCC1795.09.1"/>
<dbReference type="EnsemblFungi" id="SPCC1795.09.1">
    <property type="protein sequence ID" value="SPCC1795.09.1:pep"/>
    <property type="gene ID" value="SPCC1795.09"/>
</dbReference>
<dbReference type="GeneID" id="2538927"/>
<dbReference type="KEGG" id="spo:2538927"/>
<dbReference type="PomBase" id="SPCC1795.09">
    <property type="gene designation" value="yps1"/>
</dbReference>
<dbReference type="VEuPathDB" id="FungiDB:SPCC1795.09"/>
<dbReference type="eggNOG" id="KOG1339">
    <property type="taxonomic scope" value="Eukaryota"/>
</dbReference>
<dbReference type="HOGENOM" id="CLU_522916_0_0_1"/>
<dbReference type="InParanoid" id="O59774"/>
<dbReference type="OMA" id="QFGCNST"/>
<dbReference type="PhylomeDB" id="O59774"/>
<dbReference type="PRO" id="PR:O59774"/>
<dbReference type="Proteomes" id="UP000002485">
    <property type="component" value="Chromosome III"/>
</dbReference>
<dbReference type="GO" id="GO:0009897">
    <property type="term" value="C:external side of plasma membrane"/>
    <property type="evidence" value="ECO:0000304"/>
    <property type="project" value="PomBase"/>
</dbReference>
<dbReference type="GO" id="GO:0005576">
    <property type="term" value="C:extracellular region"/>
    <property type="evidence" value="ECO:0007669"/>
    <property type="project" value="UniProtKB-KW"/>
</dbReference>
<dbReference type="GO" id="GO:0009277">
    <property type="term" value="C:fungal-type cell wall"/>
    <property type="evidence" value="ECO:0000304"/>
    <property type="project" value="PomBase"/>
</dbReference>
<dbReference type="GO" id="GO:1990578">
    <property type="term" value="C:perinuclear endoplasmic reticulum membrane"/>
    <property type="evidence" value="ECO:0007005"/>
    <property type="project" value="PomBase"/>
</dbReference>
<dbReference type="GO" id="GO:0004190">
    <property type="term" value="F:aspartic-type endopeptidase activity"/>
    <property type="evidence" value="ECO:0000314"/>
    <property type="project" value="PomBase"/>
</dbReference>
<dbReference type="GO" id="GO:0006508">
    <property type="term" value="P:proteolysis"/>
    <property type="evidence" value="ECO:0000318"/>
    <property type="project" value="GO_Central"/>
</dbReference>
<dbReference type="Gene3D" id="2.40.70.10">
    <property type="entry name" value="Acid Proteases"/>
    <property type="match status" value="2"/>
</dbReference>
<dbReference type="InterPro" id="IPR001461">
    <property type="entry name" value="Aspartic_peptidase_A1"/>
</dbReference>
<dbReference type="InterPro" id="IPR033121">
    <property type="entry name" value="PEPTIDASE_A1"/>
</dbReference>
<dbReference type="InterPro" id="IPR021109">
    <property type="entry name" value="Peptidase_aspartic_dom_sf"/>
</dbReference>
<dbReference type="PANTHER" id="PTHR47966">
    <property type="entry name" value="BETA-SITE APP-CLEAVING ENZYME, ISOFORM A-RELATED"/>
    <property type="match status" value="1"/>
</dbReference>
<dbReference type="PANTHER" id="PTHR47966:SF51">
    <property type="entry name" value="BETA-SITE APP-CLEAVING ENZYME, ISOFORM A-RELATED"/>
    <property type="match status" value="1"/>
</dbReference>
<dbReference type="Pfam" id="PF00026">
    <property type="entry name" value="Asp"/>
    <property type="match status" value="1"/>
</dbReference>
<dbReference type="SUPFAM" id="SSF50630">
    <property type="entry name" value="Acid proteases"/>
    <property type="match status" value="1"/>
</dbReference>
<dbReference type="PROSITE" id="PS51767">
    <property type="entry name" value="PEPTIDASE_A1"/>
    <property type="match status" value="1"/>
</dbReference>
<sequence length="521" mass="57623">MRIWILIFFSFIKLVSSLQYTGNGVLALDFVAKTFPNQENQLEKRDYTYSPSGITSFPLDLQSYTYYTTTLSIGRPSISYTVAIDLDMPYTWLTYYNVMAFNPAYLGIVNSGTQWSTDELRYFLCKKESDSCYFGNASSSFHFVTSPSTFFIRYDDNITVAGINVQDSLSYSHYQALPDFQFGITLKEYVPSSMLPYKGVLGLAASTEINSIDYSDSISSFSPPTFLEQLVKEDILAYPAFSMYLDNQGNGSLLLGAVDTSKYQGQFVALKQTKLTHYAVSIYSVQFLNSTFFSNYSIITDAYFQTRETYIYLPAELAYSVMDNAGAYLSEGYFALNCDEIDLEAALIFQFGCNSTIKVPISLLVIGQVSNICLLGIRPSTDSEIVLGLLFFRNAYTFYHQSQKMIAIGQAFYNATSNLSAIVDQHIPGALTCSQYPTSVASTQLVQTSHFTSTSLSAVNISESVVYSYTSSSSMPSSAIPSFNISLISQNAVANAGNSFSPLSAMVIMMMSAVFLGLGII</sequence>
<proteinExistence type="inferred from homology"/>